<dbReference type="EC" id="3.6.5.2" evidence="4"/>
<dbReference type="EMBL" id="M96622">
    <property type="protein sequence ID" value="AAA33246.1"/>
    <property type="molecule type" value="mRNA"/>
</dbReference>
<dbReference type="EMBL" id="AAFI02000199">
    <property type="protein sequence ID" value="EAL60851.1"/>
    <property type="molecule type" value="Genomic_DNA"/>
</dbReference>
<dbReference type="RefSeq" id="XP_629300.1">
    <property type="nucleotide sequence ID" value="XM_629298.1"/>
</dbReference>
<dbReference type="SMR" id="P32252"/>
<dbReference type="FunCoup" id="P32252">
    <property type="interactions" value="181"/>
</dbReference>
<dbReference type="STRING" id="44689.P32252"/>
<dbReference type="PaxDb" id="44689-DDB0201661"/>
<dbReference type="EnsemblProtists" id="EAL60851">
    <property type="protein sequence ID" value="EAL60851"/>
    <property type="gene ID" value="DDB_G0292998"/>
</dbReference>
<dbReference type="GeneID" id="8629023"/>
<dbReference type="KEGG" id="ddi:DDB_G0292998"/>
<dbReference type="dictyBase" id="DDB_G0292998">
    <property type="gene designation" value="rasB"/>
</dbReference>
<dbReference type="VEuPathDB" id="AmoebaDB:DDB_G0292998"/>
<dbReference type="eggNOG" id="KOG0395">
    <property type="taxonomic scope" value="Eukaryota"/>
</dbReference>
<dbReference type="HOGENOM" id="CLU_041217_9_8_1"/>
<dbReference type="InParanoid" id="P32252"/>
<dbReference type="OMA" id="EYKLVVM"/>
<dbReference type="PhylomeDB" id="P32252"/>
<dbReference type="PRO" id="PR:P32252"/>
<dbReference type="Proteomes" id="UP000002195">
    <property type="component" value="Chromosome 6"/>
</dbReference>
<dbReference type="GO" id="GO:0005938">
    <property type="term" value="C:cell cortex"/>
    <property type="evidence" value="ECO:0000314"/>
    <property type="project" value="dictyBase"/>
</dbReference>
<dbReference type="GO" id="GO:0009898">
    <property type="term" value="C:cytoplasmic side of plasma membrane"/>
    <property type="evidence" value="ECO:0000314"/>
    <property type="project" value="dictyBase"/>
</dbReference>
<dbReference type="GO" id="GO:0005811">
    <property type="term" value="C:lipid droplet"/>
    <property type="evidence" value="ECO:0007005"/>
    <property type="project" value="dictyBase"/>
</dbReference>
<dbReference type="GO" id="GO:0044354">
    <property type="term" value="C:macropinosome"/>
    <property type="evidence" value="ECO:0000314"/>
    <property type="project" value="dictyBase"/>
</dbReference>
<dbReference type="GO" id="GO:0016363">
    <property type="term" value="C:nuclear matrix"/>
    <property type="evidence" value="ECO:0000314"/>
    <property type="project" value="dictyBase"/>
</dbReference>
<dbReference type="GO" id="GO:0045335">
    <property type="term" value="C:phagocytic vesicle"/>
    <property type="evidence" value="ECO:0007005"/>
    <property type="project" value="dictyBase"/>
</dbReference>
<dbReference type="GO" id="GO:0005886">
    <property type="term" value="C:plasma membrane"/>
    <property type="evidence" value="ECO:0000318"/>
    <property type="project" value="GO_Central"/>
</dbReference>
<dbReference type="GO" id="GO:0003925">
    <property type="term" value="F:G protein activity"/>
    <property type="evidence" value="ECO:0007669"/>
    <property type="project" value="UniProtKB-EC"/>
</dbReference>
<dbReference type="GO" id="GO:0019003">
    <property type="term" value="F:GDP binding"/>
    <property type="evidence" value="ECO:0000318"/>
    <property type="project" value="GO_Central"/>
</dbReference>
<dbReference type="GO" id="GO:0005525">
    <property type="term" value="F:GTP binding"/>
    <property type="evidence" value="ECO:0000250"/>
    <property type="project" value="dictyBase"/>
</dbReference>
<dbReference type="GO" id="GO:0003924">
    <property type="term" value="F:GTPase activity"/>
    <property type="evidence" value="ECO:0000318"/>
    <property type="project" value="GO_Central"/>
</dbReference>
<dbReference type="GO" id="GO:0030866">
    <property type="term" value="P:cortical actin cytoskeleton organization"/>
    <property type="evidence" value="ECO:0000315"/>
    <property type="project" value="dictyBase"/>
</dbReference>
<dbReference type="GO" id="GO:0000281">
    <property type="term" value="P:mitotic cytokinesis"/>
    <property type="evidence" value="ECO:0000315"/>
    <property type="project" value="dictyBase"/>
</dbReference>
<dbReference type="GO" id="GO:0032466">
    <property type="term" value="P:negative regulation of cytokinesis"/>
    <property type="evidence" value="ECO:0000315"/>
    <property type="project" value="dictyBase"/>
</dbReference>
<dbReference type="GO" id="GO:0045806">
    <property type="term" value="P:negative regulation of endocytosis"/>
    <property type="evidence" value="ECO:0000315"/>
    <property type="project" value="dictyBase"/>
</dbReference>
<dbReference type="GO" id="GO:0060100">
    <property type="term" value="P:positive regulation of phagocytosis, engulfment"/>
    <property type="evidence" value="ECO:0000315"/>
    <property type="project" value="dictyBase"/>
</dbReference>
<dbReference type="GO" id="GO:0007265">
    <property type="term" value="P:Ras protein signal transduction"/>
    <property type="evidence" value="ECO:0000315"/>
    <property type="project" value="dictyBase"/>
</dbReference>
<dbReference type="GO" id="GO:0051726">
    <property type="term" value="P:regulation of cell cycle"/>
    <property type="evidence" value="ECO:0000270"/>
    <property type="project" value="dictyBase"/>
</dbReference>
<dbReference type="GO" id="GO:0042127">
    <property type="term" value="P:regulation of cell population proliferation"/>
    <property type="evidence" value="ECO:0000315"/>
    <property type="project" value="dictyBase"/>
</dbReference>
<dbReference type="GO" id="GO:0043520">
    <property type="term" value="P:regulation of myosin II filament assembly"/>
    <property type="evidence" value="ECO:0000314"/>
    <property type="project" value="dictyBase"/>
</dbReference>
<dbReference type="GO" id="GO:1905169">
    <property type="term" value="P:regulation of protein localization to phagocytic vesicle"/>
    <property type="evidence" value="ECO:0000315"/>
    <property type="project" value="dictyBase"/>
</dbReference>
<dbReference type="FunFam" id="3.40.50.300:FF:000080">
    <property type="entry name" value="Ras-like GTPase Ras1"/>
    <property type="match status" value="1"/>
</dbReference>
<dbReference type="Gene3D" id="3.40.50.300">
    <property type="entry name" value="P-loop containing nucleotide triphosphate hydrolases"/>
    <property type="match status" value="1"/>
</dbReference>
<dbReference type="InterPro" id="IPR027417">
    <property type="entry name" value="P-loop_NTPase"/>
</dbReference>
<dbReference type="InterPro" id="IPR005225">
    <property type="entry name" value="Small_GTP-bd"/>
</dbReference>
<dbReference type="InterPro" id="IPR001806">
    <property type="entry name" value="Small_GTPase"/>
</dbReference>
<dbReference type="InterPro" id="IPR020849">
    <property type="entry name" value="Small_GTPase_Ras-type"/>
</dbReference>
<dbReference type="NCBIfam" id="TIGR00231">
    <property type="entry name" value="small_GTP"/>
    <property type="match status" value="1"/>
</dbReference>
<dbReference type="PANTHER" id="PTHR24070">
    <property type="entry name" value="RAS, DI-RAS, AND RHEB FAMILY MEMBERS OF SMALL GTPASE SUPERFAMILY"/>
    <property type="match status" value="1"/>
</dbReference>
<dbReference type="Pfam" id="PF00071">
    <property type="entry name" value="Ras"/>
    <property type="match status" value="1"/>
</dbReference>
<dbReference type="PRINTS" id="PR00449">
    <property type="entry name" value="RASTRNSFRMNG"/>
</dbReference>
<dbReference type="SMART" id="SM00175">
    <property type="entry name" value="RAB"/>
    <property type="match status" value="1"/>
</dbReference>
<dbReference type="SMART" id="SM00176">
    <property type="entry name" value="RAN"/>
    <property type="match status" value="1"/>
</dbReference>
<dbReference type="SMART" id="SM00173">
    <property type="entry name" value="RAS"/>
    <property type="match status" value="1"/>
</dbReference>
<dbReference type="SMART" id="SM00174">
    <property type="entry name" value="RHO"/>
    <property type="match status" value="1"/>
</dbReference>
<dbReference type="SUPFAM" id="SSF52540">
    <property type="entry name" value="P-loop containing nucleoside triphosphate hydrolases"/>
    <property type="match status" value="1"/>
</dbReference>
<dbReference type="PROSITE" id="PS51421">
    <property type="entry name" value="RAS"/>
    <property type="match status" value="1"/>
</dbReference>
<protein>
    <recommendedName>
        <fullName>Ras-like protein rasB</fullName>
        <ecNumber evidence="4">3.6.5.2</ecNumber>
    </recommendedName>
</protein>
<gene>
    <name type="primary">rasB</name>
    <name type="ORF">DDB_G0292998</name>
</gene>
<keyword id="KW-1003">Cell membrane</keyword>
<keyword id="KW-0342">GTP-binding</keyword>
<keyword id="KW-0378">Hydrolase</keyword>
<keyword id="KW-0449">Lipoprotein</keyword>
<keyword id="KW-0472">Membrane</keyword>
<keyword id="KW-0488">Methylation</keyword>
<keyword id="KW-0547">Nucleotide-binding</keyword>
<keyword id="KW-0636">Prenylation</keyword>
<keyword id="KW-1185">Reference proteome</keyword>
<accession>P32252</accession>
<accession>Q54CB9</accession>
<evidence type="ECO:0000250" key="1"/>
<evidence type="ECO:0000269" key="2">
    <source>
    </source>
</evidence>
<evidence type="ECO:0000305" key="3"/>
<evidence type="ECO:0000305" key="4">
    <source>
    </source>
</evidence>
<name>RASB_DICDI</name>
<feature type="chain" id="PRO_0000082660" description="Ras-like protein rasB">
    <location>
        <begin position="1"/>
        <end position="194"/>
    </location>
</feature>
<feature type="propeptide" id="PRO_0000281308" description="Removed in mature form" evidence="1">
    <location>
        <begin position="195"/>
        <end position="197"/>
    </location>
</feature>
<feature type="short sequence motif" description="Effector region">
    <location>
        <begin position="35"/>
        <end position="43"/>
    </location>
</feature>
<feature type="binding site" evidence="1">
    <location>
        <begin position="13"/>
        <end position="20"/>
    </location>
    <ligand>
        <name>GTP</name>
        <dbReference type="ChEBI" id="CHEBI:37565"/>
    </ligand>
</feature>
<feature type="binding site" evidence="1">
    <location>
        <begin position="60"/>
        <end position="64"/>
    </location>
    <ligand>
        <name>GTP</name>
        <dbReference type="ChEBI" id="CHEBI:37565"/>
    </ligand>
</feature>
<feature type="binding site" evidence="1">
    <location>
        <begin position="119"/>
        <end position="122"/>
    </location>
    <ligand>
        <name>GTP</name>
        <dbReference type="ChEBI" id="CHEBI:37565"/>
    </ligand>
</feature>
<feature type="modified residue" description="Cysteine methyl ester" evidence="1">
    <location>
        <position position="194"/>
    </location>
</feature>
<feature type="lipid moiety-binding region" description="S-geranylgeranyl cysteine" evidence="1">
    <location>
        <position position="194"/>
    </location>
</feature>
<organism>
    <name type="scientific">Dictyostelium discoideum</name>
    <name type="common">Social amoeba</name>
    <dbReference type="NCBI Taxonomy" id="44689"/>
    <lineage>
        <taxon>Eukaryota</taxon>
        <taxon>Amoebozoa</taxon>
        <taxon>Evosea</taxon>
        <taxon>Eumycetozoa</taxon>
        <taxon>Dictyostelia</taxon>
        <taxon>Dictyosteliales</taxon>
        <taxon>Dictyosteliaceae</taxon>
        <taxon>Dictyostelium</taxon>
    </lineage>
</organism>
<proteinExistence type="evidence at protein level"/>
<comment type="function">
    <text evidence="2">Ras proteins bind GDP/GTP and possess intrinsic GTPase activity.</text>
</comment>
<comment type="catalytic activity">
    <reaction evidence="4">
        <text>GTP + H2O = GDP + phosphate + H(+)</text>
        <dbReference type="Rhea" id="RHEA:19669"/>
        <dbReference type="ChEBI" id="CHEBI:15377"/>
        <dbReference type="ChEBI" id="CHEBI:15378"/>
        <dbReference type="ChEBI" id="CHEBI:37565"/>
        <dbReference type="ChEBI" id="CHEBI:43474"/>
        <dbReference type="ChEBI" id="CHEBI:58189"/>
        <dbReference type="EC" id="3.6.5.2"/>
    </reaction>
</comment>
<comment type="activity regulation">
    <text>Alternates between an inactive form bound to GDP and an active form bound to GTP. Activated by a guanine nucleotide-exchange factor (GEF) and inactivated by a GTPase-activating protein (GAP).</text>
</comment>
<comment type="subcellular location">
    <subcellularLocation>
        <location evidence="3">Cell membrane</location>
        <topology evidence="3">Lipid-anchor</topology>
        <orientation evidence="3">Cytoplasmic side</orientation>
    </subcellularLocation>
</comment>
<comment type="similarity">
    <text evidence="3">Belongs to the small GTPase superfamily. Ras family.</text>
</comment>
<sequence>MSVSNEYKLVVMGGGGVGKSALTIQFIQNHFIEEYDPTIEDSYRRQCQVDEDTCLLDILDTAGQDDYSAMRDQYMRTGQGFLCVYDVTSRTSFEEINVVREQIIRVKDNDKVPIVLVGNKCDLENLREVTEGEGSELAKSFSVPFLETSAKKRLNVDECFFEVVREIKKSLKEPGRSKKDKKGGILKKFKGGDCLIL</sequence>
<reference key="1">
    <citation type="journal article" date="1993" name="Oncogene">
        <title>Characterization of a third ras gene, rasB, that is expressed throughout the growth and development of Dictyostelium discoideum.</title>
        <authorList>
            <person name="Daniel J.M."/>
            <person name="Spiegelman G.B."/>
            <person name="Weeks G."/>
        </authorList>
    </citation>
    <scope>NUCLEOTIDE SEQUENCE [MRNA]</scope>
</reference>
<reference key="2">
    <citation type="journal article" date="2005" name="Nature">
        <title>The genome of the social amoeba Dictyostelium discoideum.</title>
        <authorList>
            <person name="Eichinger L."/>
            <person name="Pachebat J.A."/>
            <person name="Gloeckner G."/>
            <person name="Rajandream M.A."/>
            <person name="Sucgang R."/>
            <person name="Berriman M."/>
            <person name="Song J."/>
            <person name="Olsen R."/>
            <person name="Szafranski K."/>
            <person name="Xu Q."/>
            <person name="Tunggal B."/>
            <person name="Kummerfeld S."/>
            <person name="Madera M."/>
            <person name="Konfortov B.A."/>
            <person name="Rivero F."/>
            <person name="Bankier A.T."/>
            <person name="Lehmann R."/>
            <person name="Hamlin N."/>
            <person name="Davies R."/>
            <person name="Gaudet P."/>
            <person name="Fey P."/>
            <person name="Pilcher K."/>
            <person name="Chen G."/>
            <person name="Saunders D."/>
            <person name="Sodergren E.J."/>
            <person name="Davis P."/>
            <person name="Kerhornou A."/>
            <person name="Nie X."/>
            <person name="Hall N."/>
            <person name="Anjard C."/>
            <person name="Hemphill L."/>
            <person name="Bason N."/>
            <person name="Farbrother P."/>
            <person name="Desany B."/>
            <person name="Just E."/>
            <person name="Morio T."/>
            <person name="Rost R."/>
            <person name="Churcher C.M."/>
            <person name="Cooper J."/>
            <person name="Haydock S."/>
            <person name="van Driessche N."/>
            <person name="Cronin A."/>
            <person name="Goodhead I."/>
            <person name="Muzny D.M."/>
            <person name="Mourier T."/>
            <person name="Pain A."/>
            <person name="Lu M."/>
            <person name="Harper D."/>
            <person name="Lindsay R."/>
            <person name="Hauser H."/>
            <person name="James K.D."/>
            <person name="Quiles M."/>
            <person name="Madan Babu M."/>
            <person name="Saito T."/>
            <person name="Buchrieser C."/>
            <person name="Wardroper A."/>
            <person name="Felder M."/>
            <person name="Thangavelu M."/>
            <person name="Johnson D."/>
            <person name="Knights A."/>
            <person name="Loulseged H."/>
            <person name="Mungall K.L."/>
            <person name="Oliver K."/>
            <person name="Price C."/>
            <person name="Quail M.A."/>
            <person name="Urushihara H."/>
            <person name="Hernandez J."/>
            <person name="Rabbinowitsch E."/>
            <person name="Steffen D."/>
            <person name="Sanders M."/>
            <person name="Ma J."/>
            <person name="Kohara Y."/>
            <person name="Sharp S."/>
            <person name="Simmonds M.N."/>
            <person name="Spiegler S."/>
            <person name="Tivey A."/>
            <person name="Sugano S."/>
            <person name="White B."/>
            <person name="Walker D."/>
            <person name="Woodward J.R."/>
            <person name="Winckler T."/>
            <person name="Tanaka Y."/>
            <person name="Shaulsky G."/>
            <person name="Schleicher M."/>
            <person name="Weinstock G.M."/>
            <person name="Rosenthal A."/>
            <person name="Cox E.C."/>
            <person name="Chisholm R.L."/>
            <person name="Gibbs R.A."/>
            <person name="Loomis W.F."/>
            <person name="Platzer M."/>
            <person name="Kay R.R."/>
            <person name="Williams J.G."/>
            <person name="Dear P.H."/>
            <person name="Noegel A.A."/>
            <person name="Barrell B.G."/>
            <person name="Kuspa A."/>
        </authorList>
    </citation>
    <scope>NUCLEOTIDE SEQUENCE [LARGE SCALE GENOMIC DNA]</scope>
    <source>
        <strain>AX4</strain>
    </source>
</reference>
<reference key="3">
    <citation type="journal article" date="2006" name="Mol. Cell. Proteomics">
        <title>Proteomics fingerprinting of phagosome maturation and evidence for the role of a Galpha during uptake.</title>
        <authorList>
            <person name="Gotthardt D."/>
            <person name="Blancheteau V."/>
            <person name="Bosserhoff A."/>
            <person name="Ruppert T."/>
            <person name="Delorenzi M."/>
            <person name="Soldati T."/>
        </authorList>
    </citation>
    <scope>IDENTIFICATION BY MASS SPECTROMETRY [LARGE SCALE ANALYSIS]</scope>
    <source>
        <strain>AX2</strain>
    </source>
</reference>
<reference key="4">
    <citation type="journal article" date="2008" name="Curr. Biol.">
        <title>Spatiotemporal regulation of Ras activity provides directional sensing.</title>
        <authorList>
            <person name="Zhang S."/>
            <person name="Charest P.G."/>
            <person name="Firtel R.A."/>
        </authorList>
    </citation>
    <scope>FUNCTION</scope>
    <scope>CATALYTIC ACTIVITY</scope>
</reference>